<protein>
    <recommendedName>
        <fullName>Uncharacterized protein MJ1441</fullName>
    </recommendedName>
</protein>
<dbReference type="EMBL" id="L77117">
    <property type="protein sequence ID" value="AAB99452.1"/>
    <property type="molecule type" value="Genomic_DNA"/>
</dbReference>
<dbReference type="PIR" id="H64479">
    <property type="entry name" value="H64479"/>
</dbReference>
<dbReference type="RefSeq" id="WP_010870959.1">
    <property type="nucleotide sequence ID" value="NC_000909.1"/>
</dbReference>
<dbReference type="SMR" id="Q58836"/>
<dbReference type="FunCoup" id="Q58836">
    <property type="interactions" value="134"/>
</dbReference>
<dbReference type="STRING" id="243232.MJ_1441"/>
<dbReference type="PaxDb" id="243232-MJ_1441"/>
<dbReference type="EnsemblBacteria" id="AAB99452">
    <property type="protein sequence ID" value="AAB99452"/>
    <property type="gene ID" value="MJ_1441"/>
</dbReference>
<dbReference type="GeneID" id="1452345"/>
<dbReference type="KEGG" id="mja:MJ_1441"/>
<dbReference type="eggNOG" id="arCOG03022">
    <property type="taxonomic scope" value="Archaea"/>
</dbReference>
<dbReference type="HOGENOM" id="CLU_002017_1_0_2"/>
<dbReference type="InParanoid" id="Q58836"/>
<dbReference type="OrthoDB" id="192131at2157"/>
<dbReference type="PhylomeDB" id="Q58836"/>
<dbReference type="Proteomes" id="UP000000805">
    <property type="component" value="Chromosome"/>
</dbReference>
<dbReference type="GO" id="GO:0009058">
    <property type="term" value="P:biosynthetic process"/>
    <property type="evidence" value="ECO:0007669"/>
    <property type="project" value="InterPro"/>
</dbReference>
<dbReference type="CDD" id="cd10150">
    <property type="entry name" value="CobN_like"/>
    <property type="match status" value="1"/>
</dbReference>
<dbReference type="InterPro" id="IPR003672">
    <property type="entry name" value="CobN/Mg_chltase"/>
</dbReference>
<dbReference type="NCBIfam" id="NF004643">
    <property type="entry name" value="PRK05989.2-1"/>
    <property type="match status" value="1"/>
</dbReference>
<dbReference type="PANTHER" id="PTHR44119:SF7">
    <property type="entry name" value="MAGNESIUM CHELATASE SUBUNIT"/>
    <property type="match status" value="1"/>
</dbReference>
<dbReference type="PANTHER" id="PTHR44119">
    <property type="entry name" value="MAGNESIUM-CHELATASE SUBUNIT CHLH, CHLOROPLASTIC"/>
    <property type="match status" value="1"/>
</dbReference>
<dbReference type="Pfam" id="PF02514">
    <property type="entry name" value="CobN-Mg_chel"/>
    <property type="match status" value="1"/>
</dbReference>
<gene>
    <name type="ordered locus">MJ1441</name>
</gene>
<feature type="chain" id="PRO_0000219888" description="Uncharacterized protein MJ1441">
    <location>
        <begin position="1"/>
        <end position="1226"/>
    </location>
</feature>
<organism>
    <name type="scientific">Methanocaldococcus jannaschii (strain ATCC 43067 / DSM 2661 / JAL-1 / JCM 10045 / NBRC 100440)</name>
    <name type="common">Methanococcus jannaschii</name>
    <dbReference type="NCBI Taxonomy" id="243232"/>
    <lineage>
        <taxon>Archaea</taxon>
        <taxon>Methanobacteriati</taxon>
        <taxon>Methanobacteriota</taxon>
        <taxon>Methanomada group</taxon>
        <taxon>Methanococci</taxon>
        <taxon>Methanococcales</taxon>
        <taxon>Methanocaldococcaceae</taxon>
        <taxon>Methanocaldococcus</taxon>
    </lineage>
</organism>
<proteinExistence type="inferred from homology"/>
<reference key="1">
    <citation type="journal article" date="1996" name="Science">
        <title>Complete genome sequence of the methanogenic archaeon, Methanococcus jannaschii.</title>
        <authorList>
            <person name="Bult C.J."/>
            <person name="White O."/>
            <person name="Olsen G.J."/>
            <person name="Zhou L."/>
            <person name="Fleischmann R.D."/>
            <person name="Sutton G.G."/>
            <person name="Blake J.A."/>
            <person name="FitzGerald L.M."/>
            <person name="Clayton R.A."/>
            <person name="Gocayne J.D."/>
            <person name="Kerlavage A.R."/>
            <person name="Dougherty B.A."/>
            <person name="Tomb J.-F."/>
            <person name="Adams M.D."/>
            <person name="Reich C.I."/>
            <person name="Overbeek R."/>
            <person name="Kirkness E.F."/>
            <person name="Weinstock K.G."/>
            <person name="Merrick J.M."/>
            <person name="Glodek A."/>
            <person name="Scott J.L."/>
            <person name="Geoghagen N.S.M."/>
            <person name="Weidman J.F."/>
            <person name="Fuhrmann J.L."/>
            <person name="Nguyen D."/>
            <person name="Utterback T.R."/>
            <person name="Kelley J.M."/>
            <person name="Peterson J.D."/>
            <person name="Sadow P.W."/>
            <person name="Hanna M.C."/>
            <person name="Cotton M.D."/>
            <person name="Roberts K.M."/>
            <person name="Hurst M.A."/>
            <person name="Kaine B.P."/>
            <person name="Borodovsky M."/>
            <person name="Klenk H.-P."/>
            <person name="Fraser C.M."/>
            <person name="Smith H.O."/>
            <person name="Woese C.R."/>
            <person name="Venter J.C."/>
        </authorList>
    </citation>
    <scope>NUCLEOTIDE SEQUENCE [LARGE SCALE GENOMIC DNA]</scope>
    <source>
        <strain>ATCC 43067 / DSM 2661 / JAL-1 / JCM 10045 / NBRC 100440</strain>
    </source>
</reference>
<name>Y1441_METJA</name>
<keyword id="KW-1185">Reference proteome</keyword>
<sequence length="1226" mass="141328">MKITFYMWASYCSILKKALDELKKEGVDVEYKIYSNRNPIDDEFLEDAKDYDLVFIYRTSSDDIDLEKIKKFNENVIVVAQDPNFWNSEKSAKCYLFITYGGLDNFKNMVLYLMGKDKDVVKHPFQGIYYRGKIYEELEEFLKDVEFNKKYTVGILFSRHYLVNDDMDVIEKLLNRLDKEFNVIPVFSYGAKCEDLNALGSGESVLKYFLKDDKPIIDALINLLSFPLGTVKDKANLNKISGVEILKKLDVPVFHPIMSYYKSYEDWKKDEQGLSADIGWTIALPEFEGVIEPIIIGTTENENGLEKKFGIEERIDKVVRRIKRWIELKYKPKKDRKVIFILHNNACASVEATVGSAAHLDSFQSVINIMKKLKEEGYYVENIPENGEELAQLIMQKKAISEFRWTTVNEIIAKGGYLYLMDEEEYYEYFNTLPENVKNKILETWGDLNGKDIPAGMIYKVNGKNKIVITGLKFGNVYVCVQPKRGCAGARCDGRVCKILHDPYCPPTHQYIASYKYFNDIADIIIHVGTHGTLEFLPGKNVGLSNECYPDICIGDIPHLYIYNSDNPPEGTIAKRRSYATIIDHMQTVMVDAFYEELETLDSYIEEYLKEMDASRRHQLEHLIVEEVKKTNLLKIKEKIEKIEKEGKIHENFKEIFDELRDILEMIKNSKCNDGMHIFGELPSGEKRVEFIKSILEAIFIQNNTMNSKRRGIAERSEAMHPGYPNRGLPPMEFEYKDKNLKKKVSDVLNGKSIEDKKLEEKIKDINERIEKSDEIGSLLRGIDAKYIEPGPSGLITRGNYDILPTGRNFYSLDPYRIPTKSAYRVGVLLAEKLINRYLEEEGRYPENIALYWMASDIMWADGEGMGMILYLLGVKPVYRGGRVVGLEVIPLEELGRPRIDVTIRVSGITRDMFPNCIELVDEAIMKVANLDEPLEMNFVKKHVVENLNKGLSFRESTFRIFCSPPGTYGNGVKYAVYASAWENDEDLKDAFIYWNSYAYGKDVYGKKAINAFENILKTVDLTFNKVVTDEYDLFGCCCYFGTHGGLTNAARVLKGEEVKAYYGDTRNPNNVEVRTLKEEIERVSLTKLLNPKWIEGMKRHGYKGAGDIAKRIGRVYGWSATTKEVENWIFDEIFNTFVKNEENRKFFKEHNIYALEEIARRLLEAYQRGLWKTTEGNIEELKRAYLEIEGDIEETYSSIADIGEFQGGSVDIDMIWKEKLMSNGR</sequence>
<comment type="similarity">
    <text evidence="1">Belongs to the Mg-chelatase subunit H family.</text>
</comment>
<accession>Q58836</accession>
<evidence type="ECO:0000305" key="1"/>